<comment type="function">
    <text evidence="1">Catalyzes amidations at positions B, D, E, and G on adenosylcobyrinic A,C-diamide. NH(2) groups are provided by glutamine, and one molecule of ATP is hydrogenolyzed for each amidation.</text>
</comment>
<comment type="pathway">
    <text evidence="1">Cofactor biosynthesis; adenosylcobalamin biosynthesis.</text>
</comment>
<comment type="similarity">
    <text evidence="1">Belongs to the CobB/CobQ family. CobQ subfamily.</text>
</comment>
<organism>
    <name type="scientific">Azorhizobium caulinodans (strain ATCC 43989 / DSM 5975 / JCM 20966 / LMG 6465 / NBRC 14845 / NCIMB 13405 / ORS 571)</name>
    <dbReference type="NCBI Taxonomy" id="438753"/>
    <lineage>
        <taxon>Bacteria</taxon>
        <taxon>Pseudomonadati</taxon>
        <taxon>Pseudomonadota</taxon>
        <taxon>Alphaproteobacteria</taxon>
        <taxon>Hyphomicrobiales</taxon>
        <taxon>Xanthobacteraceae</taxon>
        <taxon>Azorhizobium</taxon>
    </lineage>
</organism>
<reference key="1">
    <citation type="submission" date="2007-04" db="EMBL/GenBank/DDBJ databases">
        <title>Complete genome sequence of the nitrogen-fixing bacterium Azorhizobium caulinodans ORS571.</title>
        <authorList>
            <person name="Lee K.B."/>
            <person name="Backer P.D."/>
            <person name="Aono T."/>
            <person name="Liu C.T."/>
            <person name="Suzuki S."/>
            <person name="Suzuki T."/>
            <person name="Kaneko T."/>
            <person name="Yamada M."/>
            <person name="Tabata S."/>
            <person name="Kupfer D.M."/>
            <person name="Najar F.Z."/>
            <person name="Wiley G.B."/>
            <person name="Roe B."/>
            <person name="Binnewies T."/>
            <person name="Ussery D."/>
            <person name="Vereecke D."/>
            <person name="Gevers D."/>
            <person name="Holsters M."/>
            <person name="Oyaizu H."/>
        </authorList>
    </citation>
    <scope>NUCLEOTIDE SEQUENCE [LARGE SCALE GENOMIC DNA]</scope>
    <source>
        <strain>ATCC 43989 / DSM 5975 / JCM 20966 / LMG 6465 / NBRC 14845 / NCIMB 13405 / ORS 571</strain>
    </source>
</reference>
<sequence length="485" mass="49942">MARALMFQGTGSDVGKSLLVAGLARAFADRGLKVRPFKPQNMSNNAAVTADGGEIGRAQALQARAARVPLSVHMNPVLLKPQSEVGAQVVVQGRVVGSAKAAAYQQMKAGLLPSVLESFRRLKTEADLVLVEGAGSASEVNLRANDIANMGFARAADVPVVLIGDIDRGGVIASLVGTKTVLDPADAAMIQGFIVNRFRGDPALFGSGMDLIAGHTGWAALGLVPFYTGAARLPAEDALGVAGPQAPKPGAKVRIAVPILPHVANFDDLDPLDAEPGLEVRRIRPSDVLPTDTDLVLLIGSKATIADLAALRAGGLHHDIQAFARRGGRVLGLCGGYQMMGEHLSDPDGVEGPPGSTEGLGLLKVGTVMTGEKRLVAVTGTSRLGAPFSGYEMHIGATEGADTARPFAELDGAGAEGAVSADGRIMGTYVHGLFGDDRQRAALMGLLGAGPAQVAYEAGVEEALDGLAAHLSAHLDLDRLLSLAR</sequence>
<name>COBQ_AZOC5</name>
<accession>A8I5C0</accession>
<dbReference type="EMBL" id="AP009384">
    <property type="protein sequence ID" value="BAF88256.1"/>
    <property type="molecule type" value="Genomic_DNA"/>
</dbReference>
<dbReference type="RefSeq" id="WP_012170785.1">
    <property type="nucleotide sequence ID" value="NC_009937.1"/>
</dbReference>
<dbReference type="SMR" id="A8I5C0"/>
<dbReference type="STRING" id="438753.AZC_2258"/>
<dbReference type="KEGG" id="azc:AZC_2258"/>
<dbReference type="eggNOG" id="COG1492">
    <property type="taxonomic scope" value="Bacteria"/>
</dbReference>
<dbReference type="HOGENOM" id="CLU_019250_2_0_5"/>
<dbReference type="UniPathway" id="UPA00148"/>
<dbReference type="Proteomes" id="UP000000270">
    <property type="component" value="Chromosome"/>
</dbReference>
<dbReference type="GO" id="GO:0015420">
    <property type="term" value="F:ABC-type vitamin B12 transporter activity"/>
    <property type="evidence" value="ECO:0007669"/>
    <property type="project" value="UniProtKB-UniRule"/>
</dbReference>
<dbReference type="GO" id="GO:0003824">
    <property type="term" value="F:catalytic activity"/>
    <property type="evidence" value="ECO:0007669"/>
    <property type="project" value="InterPro"/>
</dbReference>
<dbReference type="GO" id="GO:0009236">
    <property type="term" value="P:cobalamin biosynthetic process"/>
    <property type="evidence" value="ECO:0007669"/>
    <property type="project" value="UniProtKB-UniRule"/>
</dbReference>
<dbReference type="CDD" id="cd01750">
    <property type="entry name" value="GATase1_CobQ"/>
    <property type="match status" value="1"/>
</dbReference>
<dbReference type="Gene3D" id="3.40.50.880">
    <property type="match status" value="1"/>
</dbReference>
<dbReference type="Gene3D" id="3.40.50.300">
    <property type="entry name" value="P-loop containing nucleotide triphosphate hydrolases"/>
    <property type="match status" value="1"/>
</dbReference>
<dbReference type="HAMAP" id="MF_00028">
    <property type="entry name" value="CobQ"/>
    <property type="match status" value="1"/>
</dbReference>
<dbReference type="InterPro" id="IPR029062">
    <property type="entry name" value="Class_I_gatase-like"/>
</dbReference>
<dbReference type="InterPro" id="IPR002586">
    <property type="entry name" value="CobQ/CobB/MinD/ParA_Nub-bd_dom"/>
</dbReference>
<dbReference type="InterPro" id="IPR033949">
    <property type="entry name" value="CobQ_GATase1"/>
</dbReference>
<dbReference type="InterPro" id="IPR004459">
    <property type="entry name" value="CobQ_synth"/>
</dbReference>
<dbReference type="InterPro" id="IPR011698">
    <property type="entry name" value="GATase_3"/>
</dbReference>
<dbReference type="InterPro" id="IPR027417">
    <property type="entry name" value="P-loop_NTPase"/>
</dbReference>
<dbReference type="NCBIfam" id="TIGR00313">
    <property type="entry name" value="cobQ"/>
    <property type="match status" value="1"/>
</dbReference>
<dbReference type="NCBIfam" id="NF001989">
    <property type="entry name" value="PRK00784.1"/>
    <property type="match status" value="1"/>
</dbReference>
<dbReference type="PANTHER" id="PTHR21343:SF1">
    <property type="entry name" value="COBYRIC ACID SYNTHASE"/>
    <property type="match status" value="1"/>
</dbReference>
<dbReference type="PANTHER" id="PTHR21343">
    <property type="entry name" value="DETHIOBIOTIN SYNTHETASE"/>
    <property type="match status" value="1"/>
</dbReference>
<dbReference type="Pfam" id="PF01656">
    <property type="entry name" value="CbiA"/>
    <property type="match status" value="1"/>
</dbReference>
<dbReference type="Pfam" id="PF07685">
    <property type="entry name" value="GATase_3"/>
    <property type="match status" value="1"/>
</dbReference>
<dbReference type="SUPFAM" id="SSF52317">
    <property type="entry name" value="Class I glutamine amidotransferase-like"/>
    <property type="match status" value="1"/>
</dbReference>
<dbReference type="SUPFAM" id="SSF52540">
    <property type="entry name" value="P-loop containing nucleoside triphosphate hydrolases"/>
    <property type="match status" value="1"/>
</dbReference>
<dbReference type="PROSITE" id="PS51274">
    <property type="entry name" value="GATASE_COBBQ"/>
    <property type="match status" value="1"/>
</dbReference>
<proteinExistence type="inferred from homology"/>
<feature type="chain" id="PRO_1000071010" description="Cobyric acid synthase">
    <location>
        <begin position="1"/>
        <end position="485"/>
    </location>
</feature>
<feature type="domain" description="GATase cobBQ-type" evidence="1">
    <location>
        <begin position="252"/>
        <end position="439"/>
    </location>
</feature>
<feature type="active site" description="Nucleophile" evidence="1">
    <location>
        <position position="334"/>
    </location>
</feature>
<feature type="active site" evidence="1">
    <location>
        <position position="431"/>
    </location>
</feature>
<protein>
    <recommendedName>
        <fullName evidence="1">Cobyric acid synthase</fullName>
    </recommendedName>
</protein>
<evidence type="ECO:0000255" key="1">
    <source>
        <dbReference type="HAMAP-Rule" id="MF_00028"/>
    </source>
</evidence>
<gene>
    <name evidence="1" type="primary">cobQ</name>
    <name type="ordered locus">AZC_2258</name>
</gene>
<keyword id="KW-0169">Cobalamin biosynthesis</keyword>
<keyword id="KW-0315">Glutamine amidotransferase</keyword>
<keyword id="KW-1185">Reference proteome</keyword>